<proteinExistence type="predicted"/>
<comment type="sequence caution" evidence="1">
    <conflict type="erroneous gene model prediction">
        <sequence resource="EMBL-CDS" id="AAF98190"/>
    </conflict>
    <text>The predicted gene At1g30930 has been split into 2 genes: At1g30930 and At1g30935.</text>
</comment>
<keyword id="KW-1185">Reference proteome</keyword>
<protein>
    <recommendedName>
        <fullName>Putative F-box protein At1g30930</fullName>
    </recommendedName>
</protein>
<name>FB22_ARATH</name>
<feature type="chain" id="PRO_0000273560" description="Putative F-box protein At1g30930">
    <location>
        <begin position="1"/>
        <end position="376"/>
    </location>
</feature>
<feature type="domain" description="F-box">
    <location>
        <begin position="1"/>
        <end position="44"/>
    </location>
</feature>
<organism>
    <name type="scientific">Arabidopsis thaliana</name>
    <name type="common">Mouse-ear cress</name>
    <dbReference type="NCBI Taxonomy" id="3702"/>
    <lineage>
        <taxon>Eukaryota</taxon>
        <taxon>Viridiplantae</taxon>
        <taxon>Streptophyta</taxon>
        <taxon>Embryophyta</taxon>
        <taxon>Tracheophyta</taxon>
        <taxon>Spermatophyta</taxon>
        <taxon>Magnoliopsida</taxon>
        <taxon>eudicotyledons</taxon>
        <taxon>Gunneridae</taxon>
        <taxon>Pentapetalae</taxon>
        <taxon>rosids</taxon>
        <taxon>malvids</taxon>
        <taxon>Brassicales</taxon>
        <taxon>Brassicaceae</taxon>
        <taxon>Camelineae</taxon>
        <taxon>Arabidopsis</taxon>
    </lineage>
</organism>
<accession>P0C2D0</accession>
<accession>Q9FYI0</accession>
<gene>
    <name type="ordered locus">At1g30930</name>
    <name type="ORF">F17F8.20</name>
    <name type="ORF">F17F8.42</name>
</gene>
<dbReference type="EMBL" id="AC000107">
    <property type="protein sequence ID" value="AAF98190.1"/>
    <property type="status" value="ALT_SEQ"/>
    <property type="molecule type" value="Genomic_DNA"/>
</dbReference>
<dbReference type="EMBL" id="CP002684">
    <property type="protein sequence ID" value="AEE31295.1"/>
    <property type="molecule type" value="Genomic_DNA"/>
</dbReference>
<dbReference type="RefSeq" id="NP_174379.1">
    <property type="nucleotide sequence ID" value="NM_102831.1"/>
</dbReference>
<dbReference type="SMR" id="P0C2D0"/>
<dbReference type="FunCoup" id="P0C2D0">
    <property type="interactions" value="26"/>
</dbReference>
<dbReference type="iPTMnet" id="P0C2D0"/>
<dbReference type="PaxDb" id="3702-AT1G30930.1"/>
<dbReference type="ProteomicsDB" id="230905"/>
<dbReference type="EnsemblPlants" id="AT1G30930.1">
    <property type="protein sequence ID" value="AT1G30930.1"/>
    <property type="gene ID" value="AT1G30930"/>
</dbReference>
<dbReference type="GeneID" id="839979"/>
<dbReference type="Gramene" id="AT1G30930.1">
    <property type="protein sequence ID" value="AT1G30930.1"/>
    <property type="gene ID" value="AT1G30930"/>
</dbReference>
<dbReference type="KEGG" id="ath:AT1G30930"/>
<dbReference type="Araport" id="AT1G30930"/>
<dbReference type="TAIR" id="AT1G30930"/>
<dbReference type="HOGENOM" id="CLU_027176_8_1_1"/>
<dbReference type="InParanoid" id="P0C2D0"/>
<dbReference type="OMA" id="WTRICIN"/>
<dbReference type="PhylomeDB" id="P0C2D0"/>
<dbReference type="PRO" id="PR:P0C2D0"/>
<dbReference type="Proteomes" id="UP000006548">
    <property type="component" value="Chromosome 1"/>
</dbReference>
<dbReference type="ExpressionAtlas" id="P0C2D0">
    <property type="expression patterns" value="baseline"/>
</dbReference>
<dbReference type="CDD" id="cd22157">
    <property type="entry name" value="F-box_AtFBW1-like"/>
    <property type="match status" value="1"/>
</dbReference>
<dbReference type="Gene3D" id="1.20.1280.50">
    <property type="match status" value="1"/>
</dbReference>
<dbReference type="InterPro" id="IPR013187">
    <property type="entry name" value="F-box-assoc_dom_typ3"/>
</dbReference>
<dbReference type="InterPro" id="IPR017451">
    <property type="entry name" value="F-box-assoc_interact_dom"/>
</dbReference>
<dbReference type="InterPro" id="IPR036047">
    <property type="entry name" value="F-box-like_dom_sf"/>
</dbReference>
<dbReference type="InterPro" id="IPR001810">
    <property type="entry name" value="F-box_dom"/>
</dbReference>
<dbReference type="NCBIfam" id="TIGR01640">
    <property type="entry name" value="F_box_assoc_1"/>
    <property type="match status" value="1"/>
</dbReference>
<dbReference type="PANTHER" id="PTHR31111">
    <property type="entry name" value="BNAA05G37150D PROTEIN-RELATED"/>
    <property type="match status" value="1"/>
</dbReference>
<dbReference type="PANTHER" id="PTHR31111:SF137">
    <property type="entry name" value="F-BOX ONLY PROTEIN 12"/>
    <property type="match status" value="1"/>
</dbReference>
<dbReference type="Pfam" id="PF00646">
    <property type="entry name" value="F-box"/>
    <property type="match status" value="1"/>
</dbReference>
<dbReference type="Pfam" id="PF08268">
    <property type="entry name" value="FBA_3"/>
    <property type="match status" value="1"/>
</dbReference>
<dbReference type="SMART" id="SM00256">
    <property type="entry name" value="FBOX"/>
    <property type="match status" value="1"/>
</dbReference>
<dbReference type="SUPFAM" id="SSF81383">
    <property type="entry name" value="F-box domain"/>
    <property type="match status" value="1"/>
</dbReference>
<reference key="1">
    <citation type="journal article" date="2000" name="Nature">
        <title>Sequence and analysis of chromosome 1 of the plant Arabidopsis thaliana.</title>
        <authorList>
            <person name="Theologis A."/>
            <person name="Ecker J.R."/>
            <person name="Palm C.J."/>
            <person name="Federspiel N.A."/>
            <person name="Kaul S."/>
            <person name="White O."/>
            <person name="Alonso J."/>
            <person name="Altafi H."/>
            <person name="Araujo R."/>
            <person name="Bowman C.L."/>
            <person name="Brooks S.Y."/>
            <person name="Buehler E."/>
            <person name="Chan A."/>
            <person name="Chao Q."/>
            <person name="Chen H."/>
            <person name="Cheuk R.F."/>
            <person name="Chin C.W."/>
            <person name="Chung M.K."/>
            <person name="Conn L."/>
            <person name="Conway A.B."/>
            <person name="Conway A.R."/>
            <person name="Creasy T.H."/>
            <person name="Dewar K."/>
            <person name="Dunn P."/>
            <person name="Etgu P."/>
            <person name="Feldblyum T.V."/>
            <person name="Feng J.-D."/>
            <person name="Fong B."/>
            <person name="Fujii C.Y."/>
            <person name="Gill J.E."/>
            <person name="Goldsmith A.D."/>
            <person name="Haas B."/>
            <person name="Hansen N.F."/>
            <person name="Hughes B."/>
            <person name="Huizar L."/>
            <person name="Hunter J.L."/>
            <person name="Jenkins J."/>
            <person name="Johnson-Hopson C."/>
            <person name="Khan S."/>
            <person name="Khaykin E."/>
            <person name="Kim C.J."/>
            <person name="Koo H.L."/>
            <person name="Kremenetskaia I."/>
            <person name="Kurtz D.B."/>
            <person name="Kwan A."/>
            <person name="Lam B."/>
            <person name="Langin-Hooper S."/>
            <person name="Lee A."/>
            <person name="Lee J.M."/>
            <person name="Lenz C.A."/>
            <person name="Li J.H."/>
            <person name="Li Y.-P."/>
            <person name="Lin X."/>
            <person name="Liu S.X."/>
            <person name="Liu Z.A."/>
            <person name="Luros J.S."/>
            <person name="Maiti R."/>
            <person name="Marziali A."/>
            <person name="Militscher J."/>
            <person name="Miranda M."/>
            <person name="Nguyen M."/>
            <person name="Nierman W.C."/>
            <person name="Osborne B.I."/>
            <person name="Pai G."/>
            <person name="Peterson J."/>
            <person name="Pham P.K."/>
            <person name="Rizzo M."/>
            <person name="Rooney T."/>
            <person name="Rowley D."/>
            <person name="Sakano H."/>
            <person name="Salzberg S.L."/>
            <person name="Schwartz J.R."/>
            <person name="Shinn P."/>
            <person name="Southwick A.M."/>
            <person name="Sun H."/>
            <person name="Tallon L.J."/>
            <person name="Tambunga G."/>
            <person name="Toriumi M.J."/>
            <person name="Town C.D."/>
            <person name="Utterback T."/>
            <person name="Van Aken S."/>
            <person name="Vaysberg M."/>
            <person name="Vysotskaia V.S."/>
            <person name="Walker M."/>
            <person name="Wu D."/>
            <person name="Yu G."/>
            <person name="Fraser C.M."/>
            <person name="Venter J.C."/>
            <person name="Davis R.W."/>
        </authorList>
    </citation>
    <scope>NUCLEOTIDE SEQUENCE [LARGE SCALE GENOMIC DNA]</scope>
    <source>
        <strain>cv. Columbia</strain>
    </source>
</reference>
<reference key="2">
    <citation type="journal article" date="2017" name="Plant J.">
        <title>Araport11: a complete reannotation of the Arabidopsis thaliana reference genome.</title>
        <authorList>
            <person name="Cheng C.Y."/>
            <person name="Krishnakumar V."/>
            <person name="Chan A.P."/>
            <person name="Thibaud-Nissen F."/>
            <person name="Schobel S."/>
            <person name="Town C.D."/>
        </authorList>
    </citation>
    <scope>GENOME REANNOTATION</scope>
    <source>
        <strain>cv. Columbia</strain>
    </source>
</reference>
<sequence>MKNSIPIDLIIEIVSRSTAKSVARCHCVSKQWRAIFRRKYFIELFLTRSKARPRILFVVQDGEWSEWSFLSLPQPQNSSLVVESADIHMKKFSAGISGSIYFTYASGLIYFKCMRIPKEDEDEKPVLCDPLTGKYVILPEPRVFGMYSYLGFDPVDKEFKVLFMASGYTASKDVDHYILTLRTGELKWRTIQCPFTHEPLWTRICINGVLYYSAMNSDGNYVIVCFDVRYEKFKLVDTKCRSEFNGLINYKGKLCGVKLKYAYRVGFPVKLRMRVLEDVEKDEWSTYVKVKVKQNLSVAGMTATGDIVLFMKFASNPFYVFYFNPERNSLEVQSVEIQGLGANPDRIACNAFVDYVEDLSVNDAMLQLNSIPLQQD</sequence>
<evidence type="ECO:0000305" key="1"/>